<proteinExistence type="inferred from homology"/>
<accession>B1IL94</accession>
<comment type="catalytic activity">
    <reaction evidence="1">
        <text>GTP + H2O = 7,8-dihydroneopterin 3'-triphosphate + formate + H(+)</text>
        <dbReference type="Rhea" id="RHEA:17473"/>
        <dbReference type="ChEBI" id="CHEBI:15377"/>
        <dbReference type="ChEBI" id="CHEBI:15378"/>
        <dbReference type="ChEBI" id="CHEBI:15740"/>
        <dbReference type="ChEBI" id="CHEBI:37565"/>
        <dbReference type="ChEBI" id="CHEBI:58462"/>
        <dbReference type="EC" id="3.5.4.16"/>
    </reaction>
</comment>
<comment type="pathway">
    <text evidence="1">Cofactor biosynthesis; 7,8-dihydroneopterin triphosphate biosynthesis; 7,8-dihydroneopterin triphosphate from GTP: step 1/1.</text>
</comment>
<comment type="subunit">
    <text evidence="1">Homomer.</text>
</comment>
<comment type="similarity">
    <text evidence="1">Belongs to the GTP cyclohydrolase I family.</text>
</comment>
<reference key="1">
    <citation type="journal article" date="2007" name="PLoS ONE">
        <title>Analysis of the neurotoxin complex genes in Clostridium botulinum A1-A4 and B1 strains: BoNT/A3, /Ba4 and /B1 clusters are located within plasmids.</title>
        <authorList>
            <person name="Smith T.J."/>
            <person name="Hill K.K."/>
            <person name="Foley B.T."/>
            <person name="Detter J.C."/>
            <person name="Munk A.C."/>
            <person name="Bruce D.C."/>
            <person name="Doggett N.A."/>
            <person name="Smith L.A."/>
            <person name="Marks J.D."/>
            <person name="Xie G."/>
            <person name="Brettin T.S."/>
        </authorList>
    </citation>
    <scope>NUCLEOTIDE SEQUENCE [LARGE SCALE GENOMIC DNA]</scope>
    <source>
        <strain>Okra / Type B1</strain>
    </source>
</reference>
<dbReference type="EC" id="3.5.4.16" evidence="1"/>
<dbReference type="EMBL" id="CP000939">
    <property type="protein sequence ID" value="ACA46624.1"/>
    <property type="molecule type" value="Genomic_DNA"/>
</dbReference>
<dbReference type="RefSeq" id="WP_004451708.1">
    <property type="nucleotide sequence ID" value="NC_010516.1"/>
</dbReference>
<dbReference type="SMR" id="B1IL94"/>
<dbReference type="GeneID" id="5185811"/>
<dbReference type="KEGG" id="cbb:CLD_2996"/>
<dbReference type="HOGENOM" id="CLU_049768_3_2_9"/>
<dbReference type="UniPathway" id="UPA00848">
    <property type="reaction ID" value="UER00151"/>
</dbReference>
<dbReference type="Proteomes" id="UP000008541">
    <property type="component" value="Chromosome"/>
</dbReference>
<dbReference type="GO" id="GO:0005737">
    <property type="term" value="C:cytoplasm"/>
    <property type="evidence" value="ECO:0007669"/>
    <property type="project" value="TreeGrafter"/>
</dbReference>
<dbReference type="GO" id="GO:0005525">
    <property type="term" value="F:GTP binding"/>
    <property type="evidence" value="ECO:0007669"/>
    <property type="project" value="UniProtKB-KW"/>
</dbReference>
<dbReference type="GO" id="GO:0003934">
    <property type="term" value="F:GTP cyclohydrolase I activity"/>
    <property type="evidence" value="ECO:0007669"/>
    <property type="project" value="UniProtKB-UniRule"/>
</dbReference>
<dbReference type="GO" id="GO:0008270">
    <property type="term" value="F:zinc ion binding"/>
    <property type="evidence" value="ECO:0007669"/>
    <property type="project" value="UniProtKB-UniRule"/>
</dbReference>
<dbReference type="GO" id="GO:0006730">
    <property type="term" value="P:one-carbon metabolic process"/>
    <property type="evidence" value="ECO:0007669"/>
    <property type="project" value="UniProtKB-UniRule"/>
</dbReference>
<dbReference type="GO" id="GO:0006729">
    <property type="term" value="P:tetrahydrobiopterin biosynthetic process"/>
    <property type="evidence" value="ECO:0007669"/>
    <property type="project" value="TreeGrafter"/>
</dbReference>
<dbReference type="GO" id="GO:0046654">
    <property type="term" value="P:tetrahydrofolate biosynthetic process"/>
    <property type="evidence" value="ECO:0007669"/>
    <property type="project" value="UniProtKB-UniRule"/>
</dbReference>
<dbReference type="FunFam" id="1.10.286.10:FF:000007">
    <property type="entry name" value="GTP cyclohydrolase 1"/>
    <property type="match status" value="1"/>
</dbReference>
<dbReference type="FunFam" id="3.30.1130.10:FF:000001">
    <property type="entry name" value="GTP cyclohydrolase 1"/>
    <property type="match status" value="1"/>
</dbReference>
<dbReference type="Gene3D" id="1.10.286.10">
    <property type="match status" value="1"/>
</dbReference>
<dbReference type="Gene3D" id="3.30.1130.10">
    <property type="match status" value="1"/>
</dbReference>
<dbReference type="HAMAP" id="MF_00223">
    <property type="entry name" value="FolE"/>
    <property type="match status" value="1"/>
</dbReference>
<dbReference type="InterPro" id="IPR043133">
    <property type="entry name" value="GTP-CH-I_C/QueF"/>
</dbReference>
<dbReference type="InterPro" id="IPR043134">
    <property type="entry name" value="GTP-CH-I_N"/>
</dbReference>
<dbReference type="InterPro" id="IPR001474">
    <property type="entry name" value="GTP_CycHdrlase_I"/>
</dbReference>
<dbReference type="InterPro" id="IPR018234">
    <property type="entry name" value="GTP_CycHdrlase_I_CS"/>
</dbReference>
<dbReference type="InterPro" id="IPR020602">
    <property type="entry name" value="GTP_CycHdrlase_I_dom"/>
</dbReference>
<dbReference type="NCBIfam" id="TIGR00063">
    <property type="entry name" value="folE"/>
    <property type="match status" value="1"/>
</dbReference>
<dbReference type="NCBIfam" id="NF006825">
    <property type="entry name" value="PRK09347.1-2"/>
    <property type="match status" value="1"/>
</dbReference>
<dbReference type="NCBIfam" id="NF006826">
    <property type="entry name" value="PRK09347.1-3"/>
    <property type="match status" value="1"/>
</dbReference>
<dbReference type="PANTHER" id="PTHR11109:SF7">
    <property type="entry name" value="GTP CYCLOHYDROLASE 1"/>
    <property type="match status" value="1"/>
</dbReference>
<dbReference type="PANTHER" id="PTHR11109">
    <property type="entry name" value="GTP CYCLOHYDROLASE I"/>
    <property type="match status" value="1"/>
</dbReference>
<dbReference type="Pfam" id="PF01227">
    <property type="entry name" value="GTP_cyclohydroI"/>
    <property type="match status" value="1"/>
</dbReference>
<dbReference type="SUPFAM" id="SSF55620">
    <property type="entry name" value="Tetrahydrobiopterin biosynthesis enzymes-like"/>
    <property type="match status" value="1"/>
</dbReference>
<dbReference type="PROSITE" id="PS00859">
    <property type="entry name" value="GTP_CYCLOHYDROL_1_1"/>
    <property type="match status" value="1"/>
</dbReference>
<organism>
    <name type="scientific">Clostridium botulinum (strain Okra / Type B1)</name>
    <dbReference type="NCBI Taxonomy" id="498213"/>
    <lineage>
        <taxon>Bacteria</taxon>
        <taxon>Bacillati</taxon>
        <taxon>Bacillota</taxon>
        <taxon>Clostridia</taxon>
        <taxon>Eubacteriales</taxon>
        <taxon>Clostridiaceae</taxon>
        <taxon>Clostridium</taxon>
    </lineage>
</organism>
<evidence type="ECO:0000255" key="1">
    <source>
        <dbReference type="HAMAP-Rule" id="MF_00223"/>
    </source>
</evidence>
<gene>
    <name evidence="1" type="primary">folE</name>
    <name type="ordered locus">CLD_2996</name>
</gene>
<sequence>MAIDVKAIEEHIRGILIALGDNPEREGLKNTPKRVAKMYEEVFKGMCYSNDEIAEMFNVTFEDDLCINDNENDMVFMKEIEIFSHCEHHLALMYNMKVAIAYIPKKKIIGLSKIARIADMVGRRLQLQERIGSDIAEILQKITDSEDVAVIIEGEHGCMTTRGIKKPGTKTITTTLRGKFNTDPIVSNKLMMLYTK</sequence>
<protein>
    <recommendedName>
        <fullName evidence="1">GTP cyclohydrolase 1</fullName>
        <ecNumber evidence="1">3.5.4.16</ecNumber>
    </recommendedName>
    <alternativeName>
        <fullName evidence="1">GTP cyclohydrolase I</fullName>
        <shortName evidence="1">GTP-CH-I</shortName>
    </alternativeName>
</protein>
<name>GCH1_CLOBK</name>
<keyword id="KW-0342">GTP-binding</keyword>
<keyword id="KW-0378">Hydrolase</keyword>
<keyword id="KW-0479">Metal-binding</keyword>
<keyword id="KW-0547">Nucleotide-binding</keyword>
<keyword id="KW-0554">One-carbon metabolism</keyword>
<keyword id="KW-0862">Zinc</keyword>
<feature type="chain" id="PRO_1000100167" description="GTP cyclohydrolase 1">
    <location>
        <begin position="1"/>
        <end position="196"/>
    </location>
</feature>
<feature type="binding site" evidence="1">
    <location>
        <position position="86"/>
    </location>
    <ligand>
        <name>Zn(2+)</name>
        <dbReference type="ChEBI" id="CHEBI:29105"/>
    </ligand>
</feature>
<feature type="binding site" evidence="1">
    <location>
        <position position="89"/>
    </location>
    <ligand>
        <name>Zn(2+)</name>
        <dbReference type="ChEBI" id="CHEBI:29105"/>
    </ligand>
</feature>
<feature type="binding site" evidence="1">
    <location>
        <position position="158"/>
    </location>
    <ligand>
        <name>Zn(2+)</name>
        <dbReference type="ChEBI" id="CHEBI:29105"/>
    </ligand>
</feature>